<organism>
    <name type="scientific">Gallus gallus</name>
    <name type="common">Chicken</name>
    <dbReference type="NCBI Taxonomy" id="9031"/>
    <lineage>
        <taxon>Eukaryota</taxon>
        <taxon>Metazoa</taxon>
        <taxon>Chordata</taxon>
        <taxon>Craniata</taxon>
        <taxon>Vertebrata</taxon>
        <taxon>Euteleostomi</taxon>
        <taxon>Archelosauria</taxon>
        <taxon>Archosauria</taxon>
        <taxon>Dinosauria</taxon>
        <taxon>Saurischia</taxon>
        <taxon>Theropoda</taxon>
        <taxon>Coelurosauria</taxon>
        <taxon>Aves</taxon>
        <taxon>Neognathae</taxon>
        <taxon>Galloanserae</taxon>
        <taxon>Galliformes</taxon>
        <taxon>Phasianidae</taxon>
        <taxon>Phasianinae</taxon>
        <taxon>Gallus</taxon>
    </lineage>
</organism>
<name>GBGT1_CHICK</name>
<proteinExistence type="evidence at transcript level"/>
<reference key="1">
    <citation type="journal article" date="2005" name="Genome Biol.">
        <title>Full-length cDNAs from chicken bursal lymphocytes to facilitate gene function analysis.</title>
        <authorList>
            <person name="Caldwell R.B."/>
            <person name="Kierzek A.M."/>
            <person name="Arakawa H."/>
            <person name="Bezzubov Y."/>
            <person name="Zaim J."/>
            <person name="Fiedler P."/>
            <person name="Kutter S."/>
            <person name="Blagodatski A."/>
            <person name="Kostovska D."/>
            <person name="Koter M."/>
            <person name="Plachy J."/>
            <person name="Carninci P."/>
            <person name="Hayashizaki Y."/>
            <person name="Buerstedde J.-M."/>
        </authorList>
    </citation>
    <scope>NUCLEOTIDE SEQUENCE [LARGE SCALE MRNA]</scope>
    <source>
        <strain>CB</strain>
        <tissue>Bursa of Fabricius</tissue>
    </source>
</reference>
<dbReference type="EC" id="2.4.1.-" evidence="3"/>
<dbReference type="EMBL" id="AJ719730">
    <property type="protein sequence ID" value="CAG31389.1"/>
    <property type="molecule type" value="mRNA"/>
</dbReference>
<dbReference type="RefSeq" id="NP_001025854.1">
    <property type="nucleotide sequence ID" value="NM_001030683.2"/>
</dbReference>
<dbReference type="SMR" id="Q5ZLK4"/>
<dbReference type="FunCoup" id="Q5ZLK4">
    <property type="interactions" value="8"/>
</dbReference>
<dbReference type="STRING" id="9031.ENSGALP00000005275"/>
<dbReference type="CAZy" id="GT6">
    <property type="family name" value="Glycosyltransferase Family 6"/>
</dbReference>
<dbReference type="GlyCosmos" id="Q5ZLK4">
    <property type="glycosylation" value="1 site, No reported glycans"/>
</dbReference>
<dbReference type="GlyGen" id="Q5ZLK4">
    <property type="glycosylation" value="1 site"/>
</dbReference>
<dbReference type="PaxDb" id="9031-ENSGALP00000005275"/>
<dbReference type="GeneID" id="417163"/>
<dbReference type="KEGG" id="gga:417163"/>
<dbReference type="CTD" id="26301"/>
<dbReference type="VEuPathDB" id="HostDB:geneid_417163"/>
<dbReference type="eggNOG" id="ENOG502QQAJ">
    <property type="taxonomic scope" value="Eukaryota"/>
</dbReference>
<dbReference type="InParanoid" id="Q5ZLK4"/>
<dbReference type="OMA" id="RRLITHK"/>
<dbReference type="OrthoDB" id="10013941at2759"/>
<dbReference type="PhylomeDB" id="Q5ZLK4"/>
<dbReference type="UniPathway" id="UPA00378"/>
<dbReference type="PRO" id="PR:Q5ZLK4"/>
<dbReference type="Proteomes" id="UP000000539">
    <property type="component" value="Unassembled WGS sequence"/>
</dbReference>
<dbReference type="GO" id="GO:0005794">
    <property type="term" value="C:Golgi apparatus"/>
    <property type="evidence" value="ECO:0000318"/>
    <property type="project" value="GO_Central"/>
</dbReference>
<dbReference type="GO" id="GO:0000139">
    <property type="term" value="C:Golgi membrane"/>
    <property type="evidence" value="ECO:0007669"/>
    <property type="project" value="UniProtKB-SubCell"/>
</dbReference>
<dbReference type="GO" id="GO:0031982">
    <property type="term" value="C:vesicle"/>
    <property type="evidence" value="ECO:0000318"/>
    <property type="project" value="GO_Central"/>
</dbReference>
<dbReference type="GO" id="GO:0047277">
    <property type="term" value="F:globoside alpha-N-acetylgalactosaminyltransferase activity"/>
    <property type="evidence" value="ECO:0000318"/>
    <property type="project" value="GO_Central"/>
</dbReference>
<dbReference type="GO" id="GO:0046872">
    <property type="term" value="F:metal ion binding"/>
    <property type="evidence" value="ECO:0007669"/>
    <property type="project" value="UniProtKB-KW"/>
</dbReference>
<dbReference type="GO" id="GO:0005975">
    <property type="term" value="P:carbohydrate metabolic process"/>
    <property type="evidence" value="ECO:0007669"/>
    <property type="project" value="InterPro"/>
</dbReference>
<dbReference type="GO" id="GO:0030259">
    <property type="term" value="P:lipid glycosylation"/>
    <property type="evidence" value="ECO:0000318"/>
    <property type="project" value="GO_Central"/>
</dbReference>
<dbReference type="GO" id="GO:0006486">
    <property type="term" value="P:protein glycosylation"/>
    <property type="evidence" value="ECO:0007669"/>
    <property type="project" value="UniProtKB-UniPathway"/>
</dbReference>
<dbReference type="CDD" id="cd02515">
    <property type="entry name" value="Glyco_transf_6"/>
    <property type="match status" value="1"/>
</dbReference>
<dbReference type="FunFam" id="3.90.550.10:FF:000022">
    <property type="entry name" value="Histo-blood group ABO system transferase"/>
    <property type="match status" value="1"/>
</dbReference>
<dbReference type="Gene3D" id="3.90.550.10">
    <property type="entry name" value="Spore Coat Polysaccharide Biosynthesis Protein SpsA, Chain A"/>
    <property type="match status" value="1"/>
</dbReference>
<dbReference type="InterPro" id="IPR005076">
    <property type="entry name" value="Glyco_trans_6"/>
</dbReference>
<dbReference type="InterPro" id="IPR029044">
    <property type="entry name" value="Nucleotide-diphossugar_trans"/>
</dbReference>
<dbReference type="PANTHER" id="PTHR10462:SF49">
    <property type="entry name" value="GLOBOSIDE ALPHA-1,3-N-ACETYLGALACTOSAMINYLTRANSFERASE 1"/>
    <property type="match status" value="1"/>
</dbReference>
<dbReference type="PANTHER" id="PTHR10462">
    <property type="entry name" value="GLYCOSYLTRANSFERASE-RELATED"/>
    <property type="match status" value="1"/>
</dbReference>
<dbReference type="Pfam" id="PF03414">
    <property type="entry name" value="Glyco_transf_6"/>
    <property type="match status" value="1"/>
</dbReference>
<dbReference type="SUPFAM" id="SSF53448">
    <property type="entry name" value="Nucleotide-diphospho-sugar transferases"/>
    <property type="match status" value="1"/>
</dbReference>
<comment type="function">
    <text evidence="3">May catalyze the formation of some glycolipid via the addition of N-acetylgalactosamine (GalNAc) in alpha-1,3-linkage to some substrate. Glycolipids probably serve for adherence of some pathogens (By similarity).</text>
</comment>
<comment type="cofactor">
    <cofactor evidence="2">
        <name>Mn(2+)</name>
        <dbReference type="ChEBI" id="CHEBI:29035"/>
    </cofactor>
    <text evidence="2">Binds 1 Mn(2+) ion per subunit.</text>
</comment>
<comment type="pathway">
    <text>Protein modification; protein glycosylation.</text>
</comment>
<comment type="subcellular location">
    <subcellularLocation>
        <location evidence="5">Golgi apparatus membrane</location>
        <topology evidence="5">Single-pass type II membrane protein</topology>
    </subcellularLocation>
</comment>
<comment type="domain">
    <text evidence="1">The conserved DXD motif is involved in cofactor binding. The manganese ion interacts with the beta-phosphate group of UDP and may also have a role in catalysis (By similarity).</text>
</comment>
<comment type="similarity">
    <text evidence="5">Belongs to the glycosyltransferase 6 family.</text>
</comment>
<evidence type="ECO:0000250" key="1"/>
<evidence type="ECO:0000250" key="2">
    <source>
        <dbReference type="UniProtKB" id="P14769"/>
    </source>
</evidence>
<evidence type="ECO:0000250" key="3">
    <source>
        <dbReference type="UniProtKB" id="Q8N5D6"/>
    </source>
</evidence>
<evidence type="ECO:0000255" key="4"/>
<evidence type="ECO:0000305" key="5"/>
<keyword id="KW-0325">Glycoprotein</keyword>
<keyword id="KW-0328">Glycosyltransferase</keyword>
<keyword id="KW-0333">Golgi apparatus</keyword>
<keyword id="KW-0464">Manganese</keyword>
<keyword id="KW-0472">Membrane</keyword>
<keyword id="KW-0479">Metal-binding</keyword>
<keyword id="KW-1185">Reference proteome</keyword>
<keyword id="KW-0735">Signal-anchor</keyword>
<keyword id="KW-0808">Transferase</keyword>
<keyword id="KW-0812">Transmembrane</keyword>
<keyword id="KW-1133">Transmembrane helix</keyword>
<sequence length="343" mass="39652">MISRKALGSLVCLSAVATLIWIASGNWKVHYLPYYLPCPGIFSKKLQYLGDKPVQLFPQLFYQQPRVLAPKRQDVLTVTPWLAPIVWEGTFSPEILDSAYMPLNLTIGVTAFAVGKYTRFVSRFLKSAEMHFMKGYRVNYYIFTDNPKMIPDVQLQPGRRFDVVHIKKYSSWQEISVRRMEAINLHIAERSHREVDYLFCLDIDMVFHNAWGAETLGDMVAAIHPGYFNVPRSQFPYERRSSSAAYIPDGEGDFYYGGAVFGGLVKKVYEFTKICHMTILADKANGIMAAWQEESHLNRHFLTHKPSKLLSPEYLWDDRKPKPPEIFLIRFSTVDKNYQEVRN</sequence>
<feature type="chain" id="PRO_0000157297" description="Globoside alpha-1,3-N-acetylgalactosaminyltransferase 1">
    <location>
        <begin position="1"/>
        <end position="343"/>
    </location>
</feature>
<feature type="topological domain" description="Cytoplasmic" evidence="4">
    <location>
        <begin position="1"/>
        <end position="6"/>
    </location>
</feature>
<feature type="transmembrane region" description="Helical; Signal-anchor for type II membrane protein" evidence="4">
    <location>
        <begin position="7"/>
        <end position="27"/>
    </location>
</feature>
<feature type="topological domain" description="Lumenal" evidence="4">
    <location>
        <begin position="28"/>
        <end position="343"/>
    </location>
</feature>
<feature type="active site" description="Nucleophile" evidence="2">
    <location>
        <position position="294"/>
    </location>
</feature>
<feature type="binding site" evidence="2">
    <location>
        <begin position="112"/>
        <end position="117"/>
    </location>
    <ligand>
        <name>substrate</name>
    </ligand>
</feature>
<feature type="binding site" evidence="2">
    <location>
        <begin position="202"/>
        <end position="204"/>
    </location>
    <ligand>
        <name>substrate</name>
    </ligand>
</feature>
<feature type="binding site" evidence="2">
    <location>
        <position position="202"/>
    </location>
    <ligand>
        <name>Mn(2+)</name>
        <dbReference type="ChEBI" id="CHEBI:29035"/>
    </ligand>
</feature>
<feature type="binding site" evidence="2">
    <location>
        <position position="204"/>
    </location>
    <ligand>
        <name>Mn(2+)</name>
        <dbReference type="ChEBI" id="CHEBI:29035"/>
    </ligand>
</feature>
<feature type="binding site" evidence="2">
    <location>
        <begin position="224"/>
        <end position="227"/>
    </location>
    <ligand>
        <name>substrate</name>
    </ligand>
</feature>
<feature type="glycosylation site" description="N-linked (GlcNAc...) asparagine" evidence="4">
    <location>
        <position position="104"/>
    </location>
</feature>
<gene>
    <name evidence="3" type="primary">GBGT1</name>
    <name type="ORF">RCJMB04_5m5</name>
</gene>
<accession>Q5ZLK4</accession>
<protein>
    <recommendedName>
        <fullName evidence="3">Globoside alpha-1,3-N-acetylgalactosaminyltransferase 1</fullName>
        <ecNumber evidence="3">2.4.1.-</ecNumber>
    </recommendedName>
    <alternativeName>
        <fullName>Forssman glycolipid synthase-like protein</fullName>
    </alternativeName>
</protein>